<accession>P9WIM1</accession>
<accession>A0A112</accession>
<accession>L0TA73</accession>
<accession>P64941</accession>
<accession>Q10705</accession>
<organism>
    <name type="scientific">Mycobacterium tuberculosis (strain ATCC 25618 / H37Rv)</name>
    <dbReference type="NCBI Taxonomy" id="83332"/>
    <lineage>
        <taxon>Bacteria</taxon>
        <taxon>Bacillati</taxon>
        <taxon>Actinomycetota</taxon>
        <taxon>Actinomycetes</taxon>
        <taxon>Mycobacteriales</taxon>
        <taxon>Mycobacteriaceae</taxon>
        <taxon>Mycobacterium</taxon>
        <taxon>Mycobacterium tuberculosis complex</taxon>
    </lineage>
</organism>
<protein>
    <recommendedName>
        <fullName>Protein PafB</fullName>
    </recommendedName>
    <alternativeName>
        <fullName>Proteasome accessory factor B</fullName>
    </alternativeName>
</protein>
<comment type="function">
    <text evidence="2">Part of the pafABC operon, however PafB does not seem to be involved in pupylation or substrate degradation. Appears to play at least a small role in resistance to reactive nitrogen intermediates (RNI) in vitro.</text>
</comment>
<comment type="subunit">
    <text evidence="2">Interacts with PafC; with which it probably forms a heterocomplex.</text>
</comment>
<comment type="disruption phenotype">
    <text evidence="2">Cells lacking this gene are not severely sensitized to RNI and display no accumulation of the proteasome substrates mpa, FabD and PanB.</text>
</comment>
<comment type="similarity">
    <text evidence="3">Belongs to the PafB family.</text>
</comment>
<name>PAFB_MYCTU</name>
<dbReference type="EMBL" id="DQ990836">
    <property type="protein sequence ID" value="ABJ90141.1"/>
    <property type="molecule type" value="Genomic_DNA"/>
</dbReference>
<dbReference type="EMBL" id="AL123456">
    <property type="protein sequence ID" value="CCP44871.1"/>
    <property type="molecule type" value="Genomic_DNA"/>
</dbReference>
<dbReference type="PIR" id="C70768">
    <property type="entry name" value="C70768"/>
</dbReference>
<dbReference type="RefSeq" id="NP_216612.1">
    <property type="nucleotide sequence ID" value="NC_000962.3"/>
</dbReference>
<dbReference type="RefSeq" id="WP_003410775.1">
    <property type="nucleotide sequence ID" value="NZ_NVQJ01000061.1"/>
</dbReference>
<dbReference type="SMR" id="P9WIM1"/>
<dbReference type="STRING" id="83332.Rv2096c"/>
<dbReference type="PaxDb" id="83332-Rv2096c"/>
<dbReference type="DNASU" id="888436"/>
<dbReference type="GeneID" id="888436"/>
<dbReference type="KEGG" id="mtu:Rv2096c"/>
<dbReference type="KEGG" id="mtv:RVBD_2096c"/>
<dbReference type="TubercuList" id="Rv2096c"/>
<dbReference type="eggNOG" id="COG2378">
    <property type="taxonomic scope" value="Bacteria"/>
</dbReference>
<dbReference type="InParanoid" id="P9WIM1"/>
<dbReference type="OrthoDB" id="3268930at2"/>
<dbReference type="PhylomeDB" id="P9WIM1"/>
<dbReference type="Proteomes" id="UP000001584">
    <property type="component" value="Chromosome"/>
</dbReference>
<dbReference type="GO" id="GO:0009274">
    <property type="term" value="C:peptidoglycan-based cell wall"/>
    <property type="evidence" value="ECO:0007005"/>
    <property type="project" value="MTBBASE"/>
</dbReference>
<dbReference type="GO" id="GO:0005886">
    <property type="term" value="C:plasma membrane"/>
    <property type="evidence" value="ECO:0007005"/>
    <property type="project" value="MTBBASE"/>
</dbReference>
<dbReference type="InterPro" id="IPR051534">
    <property type="entry name" value="CBASS_pafABC_assoc_protein"/>
</dbReference>
<dbReference type="InterPro" id="IPR026881">
    <property type="entry name" value="WYL_dom"/>
</dbReference>
<dbReference type="PANTHER" id="PTHR34580">
    <property type="match status" value="1"/>
</dbReference>
<dbReference type="PANTHER" id="PTHR34580:SF3">
    <property type="entry name" value="PROTEIN PAFB"/>
    <property type="match status" value="1"/>
</dbReference>
<dbReference type="Pfam" id="PF13280">
    <property type="entry name" value="WYL"/>
    <property type="match status" value="1"/>
</dbReference>
<dbReference type="PROSITE" id="PS52050">
    <property type="entry name" value="WYL"/>
    <property type="match status" value="1"/>
</dbReference>
<proteinExistence type="evidence at protein level"/>
<feature type="chain" id="PRO_0000103963" description="Protein PafB">
    <location>
        <begin position="1"/>
        <end position="332"/>
    </location>
</feature>
<feature type="domain" description="WYL" evidence="1">
    <location>
        <begin position="147"/>
        <end position="227"/>
    </location>
</feature>
<sequence length="332" mass="35300">MATSKVERLVNLVIALLSTRGYITAEKIRSSVAGYSDSPSVEAFSRMFERDKNELRDLGIPLEVGRVSALEPTEGYRINRDAYALSPVELTPDEAAAVAVATQLWESPELITATQGALLKLRAAGVDVDPLDTGAPVAIASAAAVSGLRGSEDVLGILLSAIDSGQVVQFSHRSSRAEPYTVRTVEPWGVVTEKGRWYLVGHDRDRDATRVFRLSRIGAQVTPIGPAGATTVPAGVDLRSIVAQKVTEVPTGEQATVWVAEGRATALRRAGRSAGPRQLGGRDGEVIELEIRSSDRLAREITGYGADAIVLQPGSLRDDVLARLRAQAGALA</sequence>
<gene>
    <name type="primary">pafB</name>
    <name type="ordered locus">Rv2096c</name>
    <name type="ORF">MTCY49.36c</name>
</gene>
<reference key="1">
    <citation type="journal article" date="2007" name="J. Bacteriol.">
        <title>Characterization of the proteasome accessory factor (paf) operon in Mycobacterium tuberculosis.</title>
        <authorList>
            <person name="Festa R.A."/>
            <person name="Pearce M.J."/>
            <person name="Darwin K.H."/>
        </authorList>
    </citation>
    <scope>NUCLEOTIDE SEQUENCE [GENOMIC DNA]</scope>
    <scope>ROLE IN RESISTANCE TO RNI</scope>
    <scope>OPERON STRUCTURE</scope>
    <scope>INTERACTION WITH PAFC</scope>
    <scope>DISRUPTION PHENOTYPE</scope>
    <source>
        <strain>ATCC 25618 / H37Rv</strain>
    </source>
</reference>
<reference key="2">
    <citation type="journal article" date="1998" name="Nature">
        <title>Deciphering the biology of Mycobacterium tuberculosis from the complete genome sequence.</title>
        <authorList>
            <person name="Cole S.T."/>
            <person name="Brosch R."/>
            <person name="Parkhill J."/>
            <person name="Garnier T."/>
            <person name="Churcher C.M."/>
            <person name="Harris D.E."/>
            <person name="Gordon S.V."/>
            <person name="Eiglmeier K."/>
            <person name="Gas S."/>
            <person name="Barry C.E. III"/>
            <person name="Tekaia F."/>
            <person name="Badcock K."/>
            <person name="Basham D."/>
            <person name="Brown D."/>
            <person name="Chillingworth T."/>
            <person name="Connor R."/>
            <person name="Davies R.M."/>
            <person name="Devlin K."/>
            <person name="Feltwell T."/>
            <person name="Gentles S."/>
            <person name="Hamlin N."/>
            <person name="Holroyd S."/>
            <person name="Hornsby T."/>
            <person name="Jagels K."/>
            <person name="Krogh A."/>
            <person name="McLean J."/>
            <person name="Moule S."/>
            <person name="Murphy L.D."/>
            <person name="Oliver S."/>
            <person name="Osborne J."/>
            <person name="Quail M.A."/>
            <person name="Rajandream M.A."/>
            <person name="Rogers J."/>
            <person name="Rutter S."/>
            <person name="Seeger K."/>
            <person name="Skelton S."/>
            <person name="Squares S."/>
            <person name="Squares R."/>
            <person name="Sulston J.E."/>
            <person name="Taylor K."/>
            <person name="Whitehead S."/>
            <person name="Barrell B.G."/>
        </authorList>
    </citation>
    <scope>NUCLEOTIDE SEQUENCE [LARGE SCALE GENOMIC DNA]</scope>
    <source>
        <strain>ATCC 25618 / H37Rv</strain>
    </source>
</reference>
<reference key="3">
    <citation type="journal article" date="2011" name="Mol. Cell. Proteomics">
        <title>Proteogenomic analysis of Mycobacterium tuberculosis by high resolution mass spectrometry.</title>
        <authorList>
            <person name="Kelkar D.S."/>
            <person name="Kumar D."/>
            <person name="Kumar P."/>
            <person name="Balakrishnan L."/>
            <person name="Muthusamy B."/>
            <person name="Yadav A.K."/>
            <person name="Shrivastava P."/>
            <person name="Marimuthu A."/>
            <person name="Anand S."/>
            <person name="Sundaram H."/>
            <person name="Kingsbury R."/>
            <person name="Harsha H.C."/>
            <person name="Nair B."/>
            <person name="Prasad T.S."/>
            <person name="Chauhan D.S."/>
            <person name="Katoch K."/>
            <person name="Katoch V.M."/>
            <person name="Kumar P."/>
            <person name="Chaerkady R."/>
            <person name="Ramachandran S."/>
            <person name="Dash D."/>
            <person name="Pandey A."/>
        </authorList>
    </citation>
    <scope>IDENTIFICATION BY MASS SPECTROMETRY [LARGE SCALE ANALYSIS]</scope>
    <source>
        <strain>ATCC 25618 / H37Rv</strain>
    </source>
</reference>
<evidence type="ECO:0000255" key="1">
    <source>
        <dbReference type="PROSITE-ProRule" id="PRU01395"/>
    </source>
</evidence>
<evidence type="ECO:0000269" key="2">
    <source>
    </source>
</evidence>
<evidence type="ECO:0000305" key="3"/>
<keyword id="KW-1185">Reference proteome</keyword>